<keyword id="KW-0002">3D-structure</keyword>
<keyword id="KW-1185">Reference proteome</keyword>
<keyword id="KW-0687">Ribonucleoprotein</keyword>
<keyword id="KW-0689">Ribosomal protein</keyword>
<evidence type="ECO:0000305" key="1"/>
<gene>
    <name type="primary">rpl32e</name>
    <name type="ordered locus">Saci_0580</name>
</gene>
<reference key="1">
    <citation type="journal article" date="1999" name="Mol. Phylogenet. Evol.">
        <title>The structure and evolution of the ribosomal proteins encoded in the spc operon of the archaeon (Crenarchaeota) Sulfolobus acidocaldarius.</title>
        <authorList>
            <person name="Yang D."/>
            <person name="Kusser I."/>
            <person name="Koepke A.K."/>
            <person name="Koop B.F."/>
            <person name="Matheson A.T."/>
        </authorList>
    </citation>
    <scope>NUCLEOTIDE SEQUENCE [GENOMIC DNA]</scope>
    <source>
        <strain>ATCC 33909 / DSM 639 / JCM 8929 / NBRC 15157 / NCIMB 11770</strain>
    </source>
</reference>
<reference key="2">
    <citation type="journal article" date="2005" name="J. Bacteriol.">
        <title>The genome of Sulfolobus acidocaldarius, a model organism of the Crenarchaeota.</title>
        <authorList>
            <person name="Chen L."/>
            <person name="Bruegger K."/>
            <person name="Skovgaard M."/>
            <person name="Redder P."/>
            <person name="She Q."/>
            <person name="Torarinsson E."/>
            <person name="Greve B."/>
            <person name="Awayez M."/>
            <person name="Zibat A."/>
            <person name="Klenk H.-P."/>
            <person name="Garrett R.A."/>
        </authorList>
    </citation>
    <scope>NUCLEOTIDE SEQUENCE [LARGE SCALE GENOMIC DNA]</scope>
    <source>
        <strain>ATCC 33909 / DSM 639 / JCM 8929 / NBRC 15157 / NCIMB 11770</strain>
    </source>
</reference>
<comment type="similarity">
    <text evidence="1">Belongs to the eukaryotic ribosomal protein eL32 family.</text>
</comment>
<comment type="sequence caution" evidence="1">
    <conflict type="erroneous initiation">
        <sequence resource="EMBL-CDS" id="AAY79972"/>
    </conflict>
</comment>
<sequence length="125" mass="14526">MTKPAKKNMKSPGKAIKFLRFDWDKYYRIGRQERWRKPRGIDNAIRLELKGYQPKVKIGYRTDKQIRGLHPSGLRPILVKSVKDLEAFAKGKQDVIIIISSTIGLRKRIELIKKAEELGLKIANR</sequence>
<dbReference type="EMBL" id="Y07778">
    <property type="protein sequence ID" value="CAA69094.1"/>
    <property type="molecule type" value="Genomic_DNA"/>
</dbReference>
<dbReference type="EMBL" id="CP000077">
    <property type="protein sequence ID" value="AAY79972.1"/>
    <property type="status" value="ALT_INIT"/>
    <property type="molecule type" value="Genomic_DNA"/>
</dbReference>
<dbReference type="RefSeq" id="WP_011277474.1">
    <property type="nucleotide sequence ID" value="NZ_CP046615.1"/>
</dbReference>
<dbReference type="PDB" id="8HKU">
    <property type="method" value="EM"/>
    <property type="resolution" value="2.72 A"/>
    <property type="chains" value="L32E=3-125"/>
</dbReference>
<dbReference type="PDB" id="8HKV">
    <property type="method" value="EM"/>
    <property type="resolution" value="4.94 A"/>
    <property type="chains" value="L32E=3-125"/>
</dbReference>
<dbReference type="PDB" id="8HKY">
    <property type="method" value="EM"/>
    <property type="resolution" value="4.45 A"/>
    <property type="chains" value="L32E=3-125"/>
</dbReference>
<dbReference type="PDB" id="8HKZ">
    <property type="method" value="EM"/>
    <property type="resolution" value="4.78 A"/>
    <property type="chains" value="L32E=3-125"/>
</dbReference>
<dbReference type="PDB" id="8HL1">
    <property type="method" value="EM"/>
    <property type="resolution" value="3.93 A"/>
    <property type="chains" value="L32E=3-125"/>
</dbReference>
<dbReference type="PDB" id="8HL2">
    <property type="method" value="EM"/>
    <property type="resolution" value="4.10 A"/>
    <property type="chains" value="L32E=3-125"/>
</dbReference>
<dbReference type="PDB" id="8HL3">
    <property type="method" value="EM"/>
    <property type="resolution" value="4.80 A"/>
    <property type="chains" value="L32E=3-125"/>
</dbReference>
<dbReference type="PDB" id="8HL4">
    <property type="method" value="EM"/>
    <property type="resolution" value="4.62 A"/>
    <property type="chains" value="L32E=3-125"/>
</dbReference>
<dbReference type="PDB" id="8HL5">
    <property type="method" value="EM"/>
    <property type="resolution" value="5.72 A"/>
    <property type="chains" value="L32E=3-125"/>
</dbReference>
<dbReference type="PDBsum" id="8HKU"/>
<dbReference type="PDBsum" id="8HKV"/>
<dbReference type="PDBsum" id="8HKY"/>
<dbReference type="PDBsum" id="8HKZ"/>
<dbReference type="PDBsum" id="8HL1"/>
<dbReference type="PDBsum" id="8HL2"/>
<dbReference type="PDBsum" id="8HL3"/>
<dbReference type="PDBsum" id="8HL4"/>
<dbReference type="PDBsum" id="8HL5"/>
<dbReference type="EMDB" id="EMD-34860"/>
<dbReference type="EMDB" id="EMD-34861"/>
<dbReference type="EMDB" id="EMD-34863"/>
<dbReference type="EMDB" id="EMD-34864"/>
<dbReference type="EMDB" id="EMD-34866"/>
<dbReference type="EMDB" id="EMD-34867"/>
<dbReference type="EMDB" id="EMD-34868"/>
<dbReference type="EMDB" id="EMD-34869"/>
<dbReference type="EMDB" id="EMD-34870"/>
<dbReference type="SMR" id="O05638"/>
<dbReference type="STRING" id="330779.Saci_0580"/>
<dbReference type="KEGG" id="sai:Saci_0580"/>
<dbReference type="PATRIC" id="fig|330779.12.peg.559"/>
<dbReference type="eggNOG" id="arCOG00781">
    <property type="taxonomic scope" value="Archaea"/>
</dbReference>
<dbReference type="HOGENOM" id="CLU_071479_3_0_2"/>
<dbReference type="Proteomes" id="UP000001018">
    <property type="component" value="Chromosome"/>
</dbReference>
<dbReference type="GO" id="GO:0022625">
    <property type="term" value="C:cytosolic large ribosomal subunit"/>
    <property type="evidence" value="ECO:0007669"/>
    <property type="project" value="TreeGrafter"/>
</dbReference>
<dbReference type="GO" id="GO:0003735">
    <property type="term" value="F:structural constituent of ribosome"/>
    <property type="evidence" value="ECO:0007669"/>
    <property type="project" value="InterPro"/>
</dbReference>
<dbReference type="GO" id="GO:0006412">
    <property type="term" value="P:translation"/>
    <property type="evidence" value="ECO:0007669"/>
    <property type="project" value="UniProtKB-UniRule"/>
</dbReference>
<dbReference type="CDD" id="cd00513">
    <property type="entry name" value="Ribosomal_L32_L32e"/>
    <property type="match status" value="1"/>
</dbReference>
<dbReference type="HAMAP" id="MF_00810">
    <property type="entry name" value="Ribosomal_eL32"/>
    <property type="match status" value="1"/>
</dbReference>
<dbReference type="InterPro" id="IPR001515">
    <property type="entry name" value="Ribosomal_eL32"/>
</dbReference>
<dbReference type="InterPro" id="IPR023654">
    <property type="entry name" value="Ribosomal_eL32_arc"/>
</dbReference>
<dbReference type="InterPro" id="IPR018263">
    <property type="entry name" value="Ribosomal_eL32_CS"/>
</dbReference>
<dbReference type="InterPro" id="IPR036351">
    <property type="entry name" value="Ribosomal_eL32_sf"/>
</dbReference>
<dbReference type="NCBIfam" id="NF006332">
    <property type="entry name" value="PRK08562.1"/>
    <property type="match status" value="1"/>
</dbReference>
<dbReference type="PANTHER" id="PTHR23413">
    <property type="entry name" value="60S RIBOSOMAL PROTEIN L32 AND DNA-DIRECTED RNA POLYMERASE II, SUBUNIT N"/>
    <property type="match status" value="1"/>
</dbReference>
<dbReference type="PANTHER" id="PTHR23413:SF1">
    <property type="entry name" value="RIBOSOMAL PROTEIN L32"/>
    <property type="match status" value="1"/>
</dbReference>
<dbReference type="Pfam" id="PF01655">
    <property type="entry name" value="Ribosomal_L32e"/>
    <property type="match status" value="1"/>
</dbReference>
<dbReference type="SMART" id="SM01393">
    <property type="entry name" value="Ribosomal_L32e"/>
    <property type="match status" value="1"/>
</dbReference>
<dbReference type="SUPFAM" id="SSF52042">
    <property type="entry name" value="Ribosomal protein L32e"/>
    <property type="match status" value="1"/>
</dbReference>
<dbReference type="PROSITE" id="PS00580">
    <property type="entry name" value="RIBOSOMAL_L32E"/>
    <property type="match status" value="1"/>
</dbReference>
<organism>
    <name type="scientific">Sulfolobus acidocaldarius (strain ATCC 33909 / DSM 639 / JCM 8929 / NBRC 15157 / NCIMB 11770)</name>
    <dbReference type="NCBI Taxonomy" id="330779"/>
    <lineage>
        <taxon>Archaea</taxon>
        <taxon>Thermoproteota</taxon>
        <taxon>Thermoprotei</taxon>
        <taxon>Sulfolobales</taxon>
        <taxon>Sulfolobaceae</taxon>
        <taxon>Sulfolobus</taxon>
    </lineage>
</organism>
<protein>
    <recommendedName>
        <fullName evidence="1">Large ribosomal subunit protein eL32</fullName>
    </recommendedName>
    <alternativeName>
        <fullName>50S ribosomal protein L32e</fullName>
    </alternativeName>
</protein>
<proteinExistence type="evidence at protein level"/>
<accession>O05638</accession>
<accession>Q4JB57</accession>
<feature type="chain" id="PRO_0000131164" description="Large ribosomal subunit protein eL32">
    <location>
        <begin position="1"/>
        <end position="125"/>
    </location>
</feature>
<name>RL32_SULAC</name>